<evidence type="ECO:0000255" key="1">
    <source>
        <dbReference type="HAMAP-Rule" id="MF_00560"/>
    </source>
</evidence>
<keyword id="KW-0963">Cytoplasm</keyword>
<keyword id="KW-0489">Methyltransferase</keyword>
<keyword id="KW-1185">Reference proteome</keyword>
<keyword id="KW-0949">S-adenosyl-L-methionine</keyword>
<keyword id="KW-0808">Transferase</keyword>
<protein>
    <recommendedName>
        <fullName evidence="1">Trans-aconitate 2-methyltransferase</fullName>
        <ecNumber evidence="1">2.1.1.144</ecNumber>
    </recommendedName>
</protein>
<organism>
    <name type="scientific">Brucella anthropi (strain ATCC 49188 / DSM 6882 / CCUG 24695 / JCM 21032 / LMG 3331 / NBRC 15819 / NCTC 12168 / Alc 37)</name>
    <name type="common">Ochrobactrum anthropi</name>
    <dbReference type="NCBI Taxonomy" id="439375"/>
    <lineage>
        <taxon>Bacteria</taxon>
        <taxon>Pseudomonadati</taxon>
        <taxon>Pseudomonadota</taxon>
        <taxon>Alphaproteobacteria</taxon>
        <taxon>Hyphomicrobiales</taxon>
        <taxon>Brucellaceae</taxon>
        <taxon>Brucella/Ochrobactrum group</taxon>
        <taxon>Brucella</taxon>
    </lineage>
</organism>
<reference key="1">
    <citation type="journal article" date="2011" name="J. Bacteriol.">
        <title>Genome of Ochrobactrum anthropi ATCC 49188 T, a versatile opportunistic pathogen and symbiont of several eukaryotic hosts.</title>
        <authorList>
            <person name="Chain P.S."/>
            <person name="Lang D.M."/>
            <person name="Comerci D.J."/>
            <person name="Malfatti S.A."/>
            <person name="Vergez L.M."/>
            <person name="Shin M."/>
            <person name="Ugalde R.A."/>
            <person name="Garcia E."/>
            <person name="Tolmasky M.E."/>
        </authorList>
    </citation>
    <scope>NUCLEOTIDE SEQUENCE [LARGE SCALE GENOMIC DNA]</scope>
    <source>
        <strain>ATCC 49188 / DSM 6882 / CCUG 24695 / JCM 21032 / LMG 3331 / NBRC 15819 / NCTC 12168 / Alc 37</strain>
    </source>
</reference>
<accession>A6WZN1</accession>
<dbReference type="EC" id="2.1.1.144" evidence="1"/>
<dbReference type="EMBL" id="CP000758">
    <property type="protein sequence ID" value="ABS14435.1"/>
    <property type="molecule type" value="Genomic_DNA"/>
</dbReference>
<dbReference type="RefSeq" id="WP_012091728.1">
    <property type="nucleotide sequence ID" value="NC_009667.1"/>
</dbReference>
<dbReference type="SMR" id="A6WZN1"/>
<dbReference type="STRING" id="439375.Oant_1719"/>
<dbReference type="KEGG" id="oan:Oant_1719"/>
<dbReference type="PATRIC" id="fig|439375.7.peg.1816"/>
<dbReference type="eggNOG" id="COG4106">
    <property type="taxonomic scope" value="Bacteria"/>
</dbReference>
<dbReference type="HOGENOM" id="CLU_037990_5_2_5"/>
<dbReference type="PhylomeDB" id="A6WZN1"/>
<dbReference type="Proteomes" id="UP000002301">
    <property type="component" value="Chromosome 1"/>
</dbReference>
<dbReference type="GO" id="GO:0005737">
    <property type="term" value="C:cytoplasm"/>
    <property type="evidence" value="ECO:0007669"/>
    <property type="project" value="UniProtKB-SubCell"/>
</dbReference>
<dbReference type="GO" id="GO:0030798">
    <property type="term" value="F:trans-aconitate 2-methyltransferase activity"/>
    <property type="evidence" value="ECO:0007669"/>
    <property type="project" value="UniProtKB-UniRule"/>
</dbReference>
<dbReference type="GO" id="GO:0032259">
    <property type="term" value="P:methylation"/>
    <property type="evidence" value="ECO:0007669"/>
    <property type="project" value="UniProtKB-KW"/>
</dbReference>
<dbReference type="CDD" id="cd02440">
    <property type="entry name" value="AdoMet_MTases"/>
    <property type="match status" value="1"/>
</dbReference>
<dbReference type="Gene3D" id="1.10.150.290">
    <property type="entry name" value="S-adenosyl-L-methionine-dependent methyltransferases"/>
    <property type="match status" value="1"/>
</dbReference>
<dbReference type="Gene3D" id="3.40.50.150">
    <property type="entry name" value="Vaccinia Virus protein VP39"/>
    <property type="match status" value="1"/>
</dbReference>
<dbReference type="HAMAP" id="MF_00560">
    <property type="entry name" value="Tran_acon_Me_trans"/>
    <property type="match status" value="1"/>
</dbReference>
<dbReference type="InterPro" id="IPR029063">
    <property type="entry name" value="SAM-dependent_MTases_sf"/>
</dbReference>
<dbReference type="InterPro" id="IPR023506">
    <property type="entry name" value="Trans-aconitate_MeTrfase"/>
</dbReference>
<dbReference type="InterPro" id="IPR023149">
    <property type="entry name" value="Trans_acon_MeTrfase_C"/>
</dbReference>
<dbReference type="NCBIfam" id="NF002463">
    <property type="entry name" value="PRK01683.1"/>
    <property type="match status" value="1"/>
</dbReference>
<dbReference type="PANTHER" id="PTHR43861:SF1">
    <property type="entry name" value="TRANS-ACONITATE 2-METHYLTRANSFERASE"/>
    <property type="match status" value="1"/>
</dbReference>
<dbReference type="PANTHER" id="PTHR43861">
    <property type="entry name" value="TRANS-ACONITATE 2-METHYLTRANSFERASE-RELATED"/>
    <property type="match status" value="1"/>
</dbReference>
<dbReference type="Pfam" id="PF13489">
    <property type="entry name" value="Methyltransf_23"/>
    <property type="match status" value="1"/>
</dbReference>
<dbReference type="SUPFAM" id="SSF53335">
    <property type="entry name" value="S-adenosyl-L-methionine-dependent methyltransferases"/>
    <property type="match status" value="1"/>
</dbReference>
<proteinExistence type="inferred from homology"/>
<gene>
    <name evidence="1" type="primary">tam</name>
    <name type="ordered locus">Oant_1719</name>
</gene>
<sequence length="255" mass="28662">MKDWSAKQYLKFEDERSRPARDLLAQIPVDKPRKVVDIGCGPGNSTELLVERWPEADVSGFDTSPDMIEKAKVRLPKVDFTIGDVASYEPDAETDVLFSNAVFQWLPDHIKQMKRLLSLLRPGAVLAVQMPDNMGEQTHVGMRDVAKTEAFAAKIGAKGRGPLPPVMEYYNALAGQAARLDIWHTVYNHPLDGVDAIVEWVKATGLRPFLDPLDEQEQADYLKAYKARIAPHYPVAVDGKVLLRFPRIFLVVQKR</sequence>
<comment type="function">
    <text evidence="1">Catalyzes the S-adenosylmethionine monomethyl esterification of trans-aconitate.</text>
</comment>
<comment type="catalytic activity">
    <reaction evidence="1">
        <text>trans-aconitate + S-adenosyl-L-methionine = (E)-3-(methoxycarbonyl)pent-2-enedioate + S-adenosyl-L-homocysteine</text>
        <dbReference type="Rhea" id="RHEA:14969"/>
        <dbReference type="ChEBI" id="CHEBI:15708"/>
        <dbReference type="ChEBI" id="CHEBI:57470"/>
        <dbReference type="ChEBI" id="CHEBI:57856"/>
        <dbReference type="ChEBI" id="CHEBI:59789"/>
        <dbReference type="EC" id="2.1.1.144"/>
    </reaction>
</comment>
<comment type="subcellular location">
    <subcellularLocation>
        <location evidence="1">Cytoplasm</location>
    </subcellularLocation>
</comment>
<comment type="similarity">
    <text evidence="1">Belongs to the methyltransferase superfamily. Tam family.</text>
</comment>
<name>TAM_BRUA4</name>
<feature type="chain" id="PRO_1000056570" description="Trans-aconitate 2-methyltransferase">
    <location>
        <begin position="1"/>
        <end position="255"/>
    </location>
</feature>